<comment type="function">
    <text evidence="1">Trans-acting protein required for termination of DNA replication. Binds to DNA replication terminator sequences (terA to terF) to prevent the passage of replication forks. The termination efficiency will be affected by the affinity of this protein for the terminator sequence.</text>
</comment>
<comment type="subcellular location">
    <subcellularLocation>
        <location evidence="1">Cytoplasm</location>
    </subcellularLocation>
</comment>
<comment type="similarity">
    <text evidence="1">Belongs to the Tus family.</text>
</comment>
<evidence type="ECO:0000255" key="1">
    <source>
        <dbReference type="HAMAP-Rule" id="MF_00483"/>
    </source>
</evidence>
<dbReference type="EMBL" id="AE005674">
    <property type="protein sequence ID" value="AAN43216.2"/>
    <property type="molecule type" value="Genomic_DNA"/>
</dbReference>
<dbReference type="EMBL" id="AE014073">
    <property type="protein sequence ID" value="AAP17103.1"/>
    <property type="molecule type" value="Genomic_DNA"/>
</dbReference>
<dbReference type="RefSeq" id="NP_707509.2">
    <property type="nucleotide sequence ID" value="NC_004337.2"/>
</dbReference>
<dbReference type="RefSeq" id="WP_000135186.1">
    <property type="nucleotide sequence ID" value="NZ_WPGW01000024.1"/>
</dbReference>
<dbReference type="SMR" id="Q83KZ2"/>
<dbReference type="STRING" id="198214.SF1633"/>
<dbReference type="PaxDb" id="198214-SF1633"/>
<dbReference type="GeneID" id="1024823"/>
<dbReference type="KEGG" id="sfl:SF1633"/>
<dbReference type="KEGG" id="sfx:S1764"/>
<dbReference type="PATRIC" id="fig|198214.7.peg.1926"/>
<dbReference type="HOGENOM" id="CLU_078181_0_0_6"/>
<dbReference type="Proteomes" id="UP000001006">
    <property type="component" value="Chromosome"/>
</dbReference>
<dbReference type="Proteomes" id="UP000002673">
    <property type="component" value="Chromosome"/>
</dbReference>
<dbReference type="GO" id="GO:0005737">
    <property type="term" value="C:cytoplasm"/>
    <property type="evidence" value="ECO:0007669"/>
    <property type="project" value="UniProtKB-SubCell"/>
</dbReference>
<dbReference type="GO" id="GO:0003677">
    <property type="term" value="F:DNA binding"/>
    <property type="evidence" value="ECO:0007669"/>
    <property type="project" value="UniProtKB-UniRule"/>
</dbReference>
<dbReference type="GO" id="GO:0006274">
    <property type="term" value="P:DNA replication termination"/>
    <property type="evidence" value="ECO:0007669"/>
    <property type="project" value="UniProtKB-UniRule"/>
</dbReference>
<dbReference type="Gene3D" id="3.30.54.10">
    <property type="match status" value="1"/>
</dbReference>
<dbReference type="Gene3D" id="3.50.14.10">
    <property type="entry name" value="Replication terminator Tus, domain 1 superfamily/Replication terminator Tus"/>
    <property type="match status" value="1"/>
</dbReference>
<dbReference type="HAMAP" id="MF_00483">
    <property type="entry name" value="Rep_term_Tus"/>
    <property type="match status" value="1"/>
</dbReference>
<dbReference type="InterPro" id="IPR008865">
    <property type="entry name" value="DNA_replication_term_site-bd"/>
</dbReference>
<dbReference type="InterPro" id="IPR036381">
    <property type="entry name" value="Tus_dom1"/>
</dbReference>
<dbReference type="InterPro" id="IPR036384">
    <property type="entry name" value="Tus_sf"/>
</dbReference>
<dbReference type="NCBIfam" id="TIGR02648">
    <property type="entry name" value="rep_term_tus"/>
    <property type="match status" value="1"/>
</dbReference>
<dbReference type="Pfam" id="PF05472">
    <property type="entry name" value="Ter"/>
    <property type="match status" value="1"/>
</dbReference>
<dbReference type="SUPFAM" id="SSF56596">
    <property type="entry name" value="Replication terminator protein (Tus)"/>
    <property type="match status" value="1"/>
</dbReference>
<sequence length="309" mass="35771">MARYDLVDRLNTTFRQMEQELATFAAHLEQHKLLVARVFSLPEVKKEDEHNPLNRIEVKQHLGNDAQSLALRHFRHLFIQQQSENRSSKAAVRLPGVLCYQVDNLSQAALVSHIQHINKLKTTFEHIVTVESELPTAARFEWVHRHLPGLITLNAYRTLTVLHDPATLRFGWANKHIIKNLHRDEVLAQLEKSLKSPRSVAPWTREEWQRKLEREYQDIAALPQNAKLKIKRPVKVQPIARVWYKGDQKQVQHACPTPLIALINRDNGAGVPDVGELLNYDADNVQHRYKPQAQPLRLIIPRLHLYVAD</sequence>
<reference key="1">
    <citation type="journal article" date="2002" name="Nucleic Acids Res.">
        <title>Genome sequence of Shigella flexneri 2a: insights into pathogenicity through comparison with genomes of Escherichia coli K12 and O157.</title>
        <authorList>
            <person name="Jin Q."/>
            <person name="Yuan Z."/>
            <person name="Xu J."/>
            <person name="Wang Y."/>
            <person name="Shen Y."/>
            <person name="Lu W."/>
            <person name="Wang J."/>
            <person name="Liu H."/>
            <person name="Yang J."/>
            <person name="Yang F."/>
            <person name="Zhang X."/>
            <person name="Zhang J."/>
            <person name="Yang G."/>
            <person name="Wu H."/>
            <person name="Qu D."/>
            <person name="Dong J."/>
            <person name="Sun L."/>
            <person name="Xue Y."/>
            <person name="Zhao A."/>
            <person name="Gao Y."/>
            <person name="Zhu J."/>
            <person name="Kan B."/>
            <person name="Ding K."/>
            <person name="Chen S."/>
            <person name="Cheng H."/>
            <person name="Yao Z."/>
            <person name="He B."/>
            <person name="Chen R."/>
            <person name="Ma D."/>
            <person name="Qiang B."/>
            <person name="Wen Y."/>
            <person name="Hou Y."/>
            <person name="Yu J."/>
        </authorList>
    </citation>
    <scope>NUCLEOTIDE SEQUENCE [LARGE SCALE GENOMIC DNA]</scope>
    <source>
        <strain>301 / Serotype 2a</strain>
    </source>
</reference>
<reference key="2">
    <citation type="journal article" date="2003" name="Infect. Immun.">
        <title>Complete genome sequence and comparative genomics of Shigella flexneri serotype 2a strain 2457T.</title>
        <authorList>
            <person name="Wei J."/>
            <person name="Goldberg M.B."/>
            <person name="Burland V."/>
            <person name="Venkatesan M.M."/>
            <person name="Deng W."/>
            <person name="Fournier G."/>
            <person name="Mayhew G.F."/>
            <person name="Plunkett G. III"/>
            <person name="Rose D.J."/>
            <person name="Darling A."/>
            <person name="Mau B."/>
            <person name="Perna N.T."/>
            <person name="Payne S.M."/>
            <person name="Runyen-Janecky L.J."/>
            <person name="Zhou S."/>
            <person name="Schwartz D.C."/>
            <person name="Blattner F.R."/>
        </authorList>
    </citation>
    <scope>NUCLEOTIDE SEQUENCE [LARGE SCALE GENOMIC DNA]</scope>
    <source>
        <strain>ATCC 700930 / 2457T / Serotype 2a</strain>
    </source>
</reference>
<feature type="chain" id="PRO_1000014334" description="DNA replication terminus site-binding protein">
    <location>
        <begin position="1"/>
        <end position="309"/>
    </location>
</feature>
<organism>
    <name type="scientific">Shigella flexneri</name>
    <dbReference type="NCBI Taxonomy" id="623"/>
    <lineage>
        <taxon>Bacteria</taxon>
        <taxon>Pseudomonadati</taxon>
        <taxon>Pseudomonadota</taxon>
        <taxon>Gammaproteobacteria</taxon>
        <taxon>Enterobacterales</taxon>
        <taxon>Enterobacteriaceae</taxon>
        <taxon>Shigella</taxon>
    </lineage>
</organism>
<protein>
    <recommendedName>
        <fullName evidence="1">DNA replication terminus site-binding protein</fullName>
        <shortName evidence="1">Ter-binding protein</shortName>
    </recommendedName>
</protein>
<gene>
    <name evidence="1" type="primary">tus</name>
    <name type="ordered locus">SF1633</name>
    <name type="ordered locus">S1764</name>
</gene>
<accession>Q83KZ2</accession>
<accession>Q7UCF0</accession>
<proteinExistence type="inferred from homology"/>
<keyword id="KW-0963">Cytoplasm</keyword>
<keyword id="KW-0235">DNA replication</keyword>
<keyword id="KW-0238">DNA-binding</keyword>
<keyword id="KW-1185">Reference proteome</keyword>
<name>TUS_SHIFL</name>